<keyword id="KW-0997">Cell inner membrane</keyword>
<keyword id="KW-1003">Cell membrane</keyword>
<keyword id="KW-0378">Hydrolase</keyword>
<keyword id="KW-0472">Membrane</keyword>
<keyword id="KW-0479">Metal-binding</keyword>
<keyword id="KW-0482">Metalloprotease</keyword>
<keyword id="KW-0645">Protease</keyword>
<keyword id="KW-0812">Transmembrane</keyword>
<keyword id="KW-1133">Transmembrane helix</keyword>
<keyword id="KW-0862">Zinc</keyword>
<dbReference type="EC" id="3.4.24.-" evidence="1"/>
<dbReference type="EMBL" id="CP000075">
    <property type="protein sequence ID" value="AAY38648.1"/>
    <property type="molecule type" value="Genomic_DNA"/>
</dbReference>
<dbReference type="RefSeq" id="WP_003369784.1">
    <property type="nucleotide sequence ID" value="NC_007005.1"/>
</dbReference>
<dbReference type="RefSeq" id="YP_236686.1">
    <property type="nucleotide sequence ID" value="NC_007005.1"/>
</dbReference>
<dbReference type="SMR" id="Q4ZQC4"/>
<dbReference type="STRING" id="205918.Psyr_3616"/>
<dbReference type="MEROPS" id="M48.002"/>
<dbReference type="GeneID" id="96220110"/>
<dbReference type="KEGG" id="psb:Psyr_3616"/>
<dbReference type="PATRIC" id="fig|205918.7.peg.3713"/>
<dbReference type="eggNOG" id="COG0501">
    <property type="taxonomic scope" value="Bacteria"/>
</dbReference>
<dbReference type="HOGENOM" id="CLU_042266_1_0_6"/>
<dbReference type="OrthoDB" id="15218at2"/>
<dbReference type="Proteomes" id="UP000000426">
    <property type="component" value="Chromosome"/>
</dbReference>
<dbReference type="GO" id="GO:0005886">
    <property type="term" value="C:plasma membrane"/>
    <property type="evidence" value="ECO:0007669"/>
    <property type="project" value="UniProtKB-SubCell"/>
</dbReference>
<dbReference type="GO" id="GO:0004222">
    <property type="term" value="F:metalloendopeptidase activity"/>
    <property type="evidence" value="ECO:0007669"/>
    <property type="project" value="UniProtKB-UniRule"/>
</dbReference>
<dbReference type="GO" id="GO:0008270">
    <property type="term" value="F:zinc ion binding"/>
    <property type="evidence" value="ECO:0007669"/>
    <property type="project" value="UniProtKB-UniRule"/>
</dbReference>
<dbReference type="GO" id="GO:0006508">
    <property type="term" value="P:proteolysis"/>
    <property type="evidence" value="ECO:0007669"/>
    <property type="project" value="UniProtKB-KW"/>
</dbReference>
<dbReference type="CDD" id="cd07335">
    <property type="entry name" value="M48B_HtpX_like"/>
    <property type="match status" value="1"/>
</dbReference>
<dbReference type="Gene3D" id="3.30.2010.10">
    <property type="entry name" value="Metalloproteases ('zincins'), catalytic domain"/>
    <property type="match status" value="1"/>
</dbReference>
<dbReference type="HAMAP" id="MF_00188">
    <property type="entry name" value="Pept_M48_protease_HtpX"/>
    <property type="match status" value="1"/>
</dbReference>
<dbReference type="InterPro" id="IPR050083">
    <property type="entry name" value="HtpX_protease"/>
</dbReference>
<dbReference type="InterPro" id="IPR022919">
    <property type="entry name" value="Pept_M48_protease_HtpX"/>
</dbReference>
<dbReference type="InterPro" id="IPR001915">
    <property type="entry name" value="Peptidase_M48"/>
</dbReference>
<dbReference type="NCBIfam" id="NF003965">
    <property type="entry name" value="PRK05457.1"/>
    <property type="match status" value="1"/>
</dbReference>
<dbReference type="PANTHER" id="PTHR43221">
    <property type="entry name" value="PROTEASE HTPX"/>
    <property type="match status" value="1"/>
</dbReference>
<dbReference type="PANTHER" id="PTHR43221:SF1">
    <property type="entry name" value="PROTEASE HTPX"/>
    <property type="match status" value="1"/>
</dbReference>
<dbReference type="Pfam" id="PF01435">
    <property type="entry name" value="Peptidase_M48"/>
    <property type="match status" value="1"/>
</dbReference>
<accession>Q4ZQC4</accession>
<comment type="cofactor">
    <cofactor evidence="1">
        <name>Zn(2+)</name>
        <dbReference type="ChEBI" id="CHEBI:29105"/>
    </cofactor>
    <text evidence="1">Binds 1 zinc ion per subunit.</text>
</comment>
<comment type="subcellular location">
    <subcellularLocation>
        <location evidence="1">Cell inner membrane</location>
        <topology evidence="1">Multi-pass membrane protein</topology>
    </subcellularLocation>
</comment>
<comment type="similarity">
    <text evidence="1">Belongs to the peptidase M48B family.</text>
</comment>
<feature type="chain" id="PRO_1000020917" description="Protease HtpX">
    <location>
        <begin position="1"/>
        <end position="295"/>
    </location>
</feature>
<feature type="transmembrane region" description="Helical" evidence="1">
    <location>
        <begin position="4"/>
        <end position="24"/>
    </location>
</feature>
<feature type="transmembrane region" description="Helical" evidence="1">
    <location>
        <begin position="42"/>
        <end position="62"/>
    </location>
</feature>
<feature type="transmembrane region" description="Helical" evidence="1">
    <location>
        <begin position="158"/>
        <end position="178"/>
    </location>
</feature>
<feature type="transmembrane region" description="Helical" evidence="1">
    <location>
        <begin position="199"/>
        <end position="219"/>
    </location>
</feature>
<feature type="active site" evidence="1">
    <location>
        <position position="148"/>
    </location>
</feature>
<feature type="binding site" evidence="1">
    <location>
        <position position="147"/>
    </location>
    <ligand>
        <name>Zn(2+)</name>
        <dbReference type="ChEBI" id="CHEBI:29105"/>
        <note>catalytic</note>
    </ligand>
</feature>
<feature type="binding site" evidence="1">
    <location>
        <position position="151"/>
    </location>
    <ligand>
        <name>Zn(2+)</name>
        <dbReference type="ChEBI" id="CHEBI:29105"/>
        <note>catalytic</note>
    </ligand>
</feature>
<feature type="binding site" evidence="1">
    <location>
        <position position="224"/>
    </location>
    <ligand>
        <name>Zn(2+)</name>
        <dbReference type="ChEBI" id="CHEBI:29105"/>
        <note>catalytic</note>
    </ligand>
</feature>
<name>HTPX_PSEU2</name>
<protein>
    <recommendedName>
        <fullName evidence="1">Protease HtpX</fullName>
        <ecNumber evidence="1">3.4.24.-</ecNumber>
    </recommendedName>
    <alternativeName>
        <fullName evidence="1">Heat shock protein HtpX</fullName>
    </alternativeName>
</protein>
<gene>
    <name evidence="1" type="primary">htpX</name>
    <name type="ordered locus">Psyr_3616</name>
</gene>
<sequence length="295" mass="32227">MMRILLFLATNLAVVLIASITLSLFGFNGFMAANGVDLNLNQLLVFCAVFGFAGSLFSLFISKWMAKMSTGTQIISQPRTRHEQWLLQTVEQLSRDAGIKMPEVGIFPAYEANAFATGWNKNDALVAVSQGLLERFSPDEVKAVLAHEIGHVANGDMVTLALVQGVVNTFVMFFARIIGNFVDKVIFKTENGQGIAYYITTIFAELVLGFLASAIVMWFSRKREFRADDAGARLAGTGAMIGALQRLRSEQGVPVNMPDSLTAFGINAGLKKGLAGLFMSHPPLEQRIEALRRRG</sequence>
<evidence type="ECO:0000255" key="1">
    <source>
        <dbReference type="HAMAP-Rule" id="MF_00188"/>
    </source>
</evidence>
<reference key="1">
    <citation type="journal article" date="2005" name="Proc. Natl. Acad. Sci. U.S.A.">
        <title>Comparison of the complete genome sequences of Pseudomonas syringae pv. syringae B728a and pv. tomato DC3000.</title>
        <authorList>
            <person name="Feil H."/>
            <person name="Feil W.S."/>
            <person name="Chain P."/>
            <person name="Larimer F."/>
            <person name="Dibartolo G."/>
            <person name="Copeland A."/>
            <person name="Lykidis A."/>
            <person name="Trong S."/>
            <person name="Nolan M."/>
            <person name="Goltsman E."/>
            <person name="Thiel J."/>
            <person name="Malfatti S."/>
            <person name="Loper J.E."/>
            <person name="Lapidus A."/>
            <person name="Detter J.C."/>
            <person name="Land M."/>
            <person name="Richardson P.M."/>
            <person name="Kyrpides N.C."/>
            <person name="Ivanova N."/>
            <person name="Lindow S.E."/>
        </authorList>
    </citation>
    <scope>NUCLEOTIDE SEQUENCE [LARGE SCALE GENOMIC DNA]</scope>
    <source>
        <strain>B728a</strain>
    </source>
</reference>
<organism>
    <name type="scientific">Pseudomonas syringae pv. syringae (strain B728a)</name>
    <dbReference type="NCBI Taxonomy" id="205918"/>
    <lineage>
        <taxon>Bacteria</taxon>
        <taxon>Pseudomonadati</taxon>
        <taxon>Pseudomonadota</taxon>
        <taxon>Gammaproteobacteria</taxon>
        <taxon>Pseudomonadales</taxon>
        <taxon>Pseudomonadaceae</taxon>
        <taxon>Pseudomonas</taxon>
        <taxon>Pseudomonas syringae</taxon>
    </lineage>
</organism>
<proteinExistence type="inferred from homology"/>